<feature type="chain" id="PRO_0000338818" description="Translation initiation factor IF-1">
    <location>
        <begin position="1"/>
        <end position="72"/>
    </location>
</feature>
<feature type="domain" description="S1-like" evidence="1">
    <location>
        <begin position="1"/>
        <end position="72"/>
    </location>
</feature>
<proteinExistence type="inferred from homology"/>
<accession>A8LS17</accession>
<protein>
    <recommendedName>
        <fullName evidence="1">Translation initiation factor IF-1</fullName>
    </recommendedName>
</protein>
<evidence type="ECO:0000255" key="1">
    <source>
        <dbReference type="HAMAP-Rule" id="MF_00075"/>
    </source>
</evidence>
<gene>
    <name evidence="1" type="primary">infA</name>
    <name type="ordered locus">Dshi_0982</name>
</gene>
<keyword id="KW-0963">Cytoplasm</keyword>
<keyword id="KW-0396">Initiation factor</keyword>
<keyword id="KW-0648">Protein biosynthesis</keyword>
<keyword id="KW-1185">Reference proteome</keyword>
<keyword id="KW-0694">RNA-binding</keyword>
<keyword id="KW-0699">rRNA-binding</keyword>
<reference key="1">
    <citation type="journal article" date="2010" name="ISME J.">
        <title>The complete genome sequence of the algal symbiont Dinoroseobacter shibae: a hitchhiker's guide to life in the sea.</title>
        <authorList>
            <person name="Wagner-Dobler I."/>
            <person name="Ballhausen B."/>
            <person name="Berger M."/>
            <person name="Brinkhoff T."/>
            <person name="Buchholz I."/>
            <person name="Bunk B."/>
            <person name="Cypionka H."/>
            <person name="Daniel R."/>
            <person name="Drepper T."/>
            <person name="Gerdts G."/>
            <person name="Hahnke S."/>
            <person name="Han C."/>
            <person name="Jahn D."/>
            <person name="Kalhoefer D."/>
            <person name="Kiss H."/>
            <person name="Klenk H.P."/>
            <person name="Kyrpides N."/>
            <person name="Liebl W."/>
            <person name="Liesegang H."/>
            <person name="Meincke L."/>
            <person name="Pati A."/>
            <person name="Petersen J."/>
            <person name="Piekarski T."/>
            <person name="Pommerenke C."/>
            <person name="Pradella S."/>
            <person name="Pukall R."/>
            <person name="Rabus R."/>
            <person name="Stackebrandt E."/>
            <person name="Thole S."/>
            <person name="Thompson L."/>
            <person name="Tielen P."/>
            <person name="Tomasch J."/>
            <person name="von Jan M."/>
            <person name="Wanphrut N."/>
            <person name="Wichels A."/>
            <person name="Zech H."/>
            <person name="Simon M."/>
        </authorList>
    </citation>
    <scope>NUCLEOTIDE SEQUENCE [LARGE SCALE GENOMIC DNA]</scope>
    <source>
        <strain>DSM 16493 / NCIMB 14021 / DFL 12</strain>
    </source>
</reference>
<sequence length="72" mass="8312">MAKEELLEFPGVVKELLPNATFRVELENGHEIIAHTAGKMRKNRIRVLAGDKVQVEMTPYDLTKGRINYRFK</sequence>
<name>IF1_DINSH</name>
<organism>
    <name type="scientific">Dinoroseobacter shibae (strain DSM 16493 / NCIMB 14021 / DFL 12)</name>
    <dbReference type="NCBI Taxonomy" id="398580"/>
    <lineage>
        <taxon>Bacteria</taxon>
        <taxon>Pseudomonadati</taxon>
        <taxon>Pseudomonadota</taxon>
        <taxon>Alphaproteobacteria</taxon>
        <taxon>Rhodobacterales</taxon>
        <taxon>Roseobacteraceae</taxon>
        <taxon>Dinoroseobacter</taxon>
    </lineage>
</organism>
<dbReference type="EMBL" id="CP000830">
    <property type="protein sequence ID" value="ABV92724.1"/>
    <property type="molecule type" value="Genomic_DNA"/>
</dbReference>
<dbReference type="RefSeq" id="WP_007205486.1">
    <property type="nucleotide sequence ID" value="NC_009952.1"/>
</dbReference>
<dbReference type="SMR" id="A8LS17"/>
<dbReference type="STRING" id="398580.Dshi_0982"/>
<dbReference type="KEGG" id="dsh:Dshi_0982"/>
<dbReference type="eggNOG" id="COG0361">
    <property type="taxonomic scope" value="Bacteria"/>
</dbReference>
<dbReference type="HOGENOM" id="CLU_151267_1_0_5"/>
<dbReference type="OrthoDB" id="9803250at2"/>
<dbReference type="Proteomes" id="UP000006833">
    <property type="component" value="Chromosome"/>
</dbReference>
<dbReference type="GO" id="GO:0005829">
    <property type="term" value="C:cytosol"/>
    <property type="evidence" value="ECO:0007669"/>
    <property type="project" value="TreeGrafter"/>
</dbReference>
<dbReference type="GO" id="GO:0043022">
    <property type="term" value="F:ribosome binding"/>
    <property type="evidence" value="ECO:0007669"/>
    <property type="project" value="UniProtKB-UniRule"/>
</dbReference>
<dbReference type="GO" id="GO:0019843">
    <property type="term" value="F:rRNA binding"/>
    <property type="evidence" value="ECO:0007669"/>
    <property type="project" value="UniProtKB-UniRule"/>
</dbReference>
<dbReference type="GO" id="GO:0003743">
    <property type="term" value="F:translation initiation factor activity"/>
    <property type="evidence" value="ECO:0007669"/>
    <property type="project" value="UniProtKB-UniRule"/>
</dbReference>
<dbReference type="CDD" id="cd04451">
    <property type="entry name" value="S1_IF1"/>
    <property type="match status" value="1"/>
</dbReference>
<dbReference type="FunFam" id="2.40.50.140:FF:000002">
    <property type="entry name" value="Translation initiation factor IF-1"/>
    <property type="match status" value="1"/>
</dbReference>
<dbReference type="Gene3D" id="2.40.50.140">
    <property type="entry name" value="Nucleic acid-binding proteins"/>
    <property type="match status" value="1"/>
</dbReference>
<dbReference type="HAMAP" id="MF_00075">
    <property type="entry name" value="IF_1"/>
    <property type="match status" value="1"/>
</dbReference>
<dbReference type="InterPro" id="IPR012340">
    <property type="entry name" value="NA-bd_OB-fold"/>
</dbReference>
<dbReference type="InterPro" id="IPR006196">
    <property type="entry name" value="RNA-binding_domain_S1_IF1"/>
</dbReference>
<dbReference type="InterPro" id="IPR003029">
    <property type="entry name" value="S1_domain"/>
</dbReference>
<dbReference type="InterPro" id="IPR004368">
    <property type="entry name" value="TIF_IF1"/>
</dbReference>
<dbReference type="NCBIfam" id="TIGR00008">
    <property type="entry name" value="infA"/>
    <property type="match status" value="1"/>
</dbReference>
<dbReference type="PANTHER" id="PTHR33370">
    <property type="entry name" value="TRANSLATION INITIATION FACTOR IF-1, CHLOROPLASTIC"/>
    <property type="match status" value="1"/>
</dbReference>
<dbReference type="PANTHER" id="PTHR33370:SF1">
    <property type="entry name" value="TRANSLATION INITIATION FACTOR IF-1, CHLOROPLASTIC"/>
    <property type="match status" value="1"/>
</dbReference>
<dbReference type="Pfam" id="PF01176">
    <property type="entry name" value="eIF-1a"/>
    <property type="match status" value="1"/>
</dbReference>
<dbReference type="SMART" id="SM00316">
    <property type="entry name" value="S1"/>
    <property type="match status" value="1"/>
</dbReference>
<dbReference type="SUPFAM" id="SSF50249">
    <property type="entry name" value="Nucleic acid-binding proteins"/>
    <property type="match status" value="1"/>
</dbReference>
<dbReference type="PROSITE" id="PS50832">
    <property type="entry name" value="S1_IF1_TYPE"/>
    <property type="match status" value="1"/>
</dbReference>
<comment type="function">
    <text evidence="1">One of the essential components for the initiation of protein synthesis. Stabilizes the binding of IF-2 and IF-3 on the 30S subunit to which N-formylmethionyl-tRNA(fMet) subsequently binds. Helps modulate mRNA selection, yielding the 30S pre-initiation complex (PIC). Upon addition of the 50S ribosomal subunit IF-1, IF-2 and IF-3 are released leaving the mature 70S translation initiation complex.</text>
</comment>
<comment type="subunit">
    <text evidence="1">Component of the 30S ribosomal translation pre-initiation complex which assembles on the 30S ribosome in the order IF-2 and IF-3, IF-1 and N-formylmethionyl-tRNA(fMet); mRNA recruitment can occur at any time during PIC assembly.</text>
</comment>
<comment type="subcellular location">
    <subcellularLocation>
        <location evidence="1">Cytoplasm</location>
    </subcellularLocation>
</comment>
<comment type="similarity">
    <text evidence="1">Belongs to the IF-1 family.</text>
</comment>